<comment type="function">
    <text evidence="1">Potential calcium sensor.</text>
</comment>
<comment type="similarity">
    <text evidence="5">Belongs to the calmodulin family.</text>
</comment>
<gene>
    <name evidence="4" type="primary">CML30</name>
    <name type="ordered locus">At2g15680</name>
    <name type="ORF">F9O13.23</name>
</gene>
<name>CML30_ARATH</name>
<dbReference type="EMBL" id="AC006248">
    <property type="protein sequence ID" value="AAD17412.1"/>
    <property type="molecule type" value="Genomic_DNA"/>
</dbReference>
<dbReference type="EMBL" id="CP002685">
    <property type="protein sequence ID" value="AEC06429.1"/>
    <property type="molecule type" value="Genomic_DNA"/>
</dbReference>
<dbReference type="EMBL" id="AY128375">
    <property type="protein sequence ID" value="AAM91578.1"/>
    <property type="molecule type" value="mRNA"/>
</dbReference>
<dbReference type="EMBL" id="BT006571">
    <property type="protein sequence ID" value="AAP21379.1"/>
    <property type="molecule type" value="mRNA"/>
</dbReference>
<dbReference type="PIR" id="A84532">
    <property type="entry name" value="A84532"/>
</dbReference>
<dbReference type="RefSeq" id="NP_179170.1">
    <property type="nucleotide sequence ID" value="NM_127129.2"/>
</dbReference>
<dbReference type="SMR" id="Q9ZQE6"/>
<dbReference type="FunCoup" id="Q9ZQE6">
    <property type="interactions" value="202"/>
</dbReference>
<dbReference type="STRING" id="3702.Q9ZQE6"/>
<dbReference type="iPTMnet" id="Q9ZQE6"/>
<dbReference type="PaxDb" id="3702-AT2G15680.1"/>
<dbReference type="ProteomicsDB" id="240900"/>
<dbReference type="EnsemblPlants" id="AT2G15680.1">
    <property type="protein sequence ID" value="AT2G15680.1"/>
    <property type="gene ID" value="AT2G15680"/>
</dbReference>
<dbReference type="GeneID" id="816061"/>
<dbReference type="Gramene" id="AT2G15680.1">
    <property type="protein sequence ID" value="AT2G15680.1"/>
    <property type="gene ID" value="AT2G15680"/>
</dbReference>
<dbReference type="KEGG" id="ath:AT2G15680"/>
<dbReference type="Araport" id="AT2G15680"/>
<dbReference type="TAIR" id="AT2G15680">
    <property type="gene designation" value="CML30"/>
</dbReference>
<dbReference type="eggNOG" id="KOG0027">
    <property type="taxonomic scope" value="Eukaryota"/>
</dbReference>
<dbReference type="HOGENOM" id="CLU_061288_20_4_1"/>
<dbReference type="InParanoid" id="Q9ZQE6"/>
<dbReference type="OMA" id="RFDSNKD"/>
<dbReference type="OrthoDB" id="26525at2759"/>
<dbReference type="PhylomeDB" id="Q9ZQE6"/>
<dbReference type="PRO" id="PR:Q9ZQE6"/>
<dbReference type="Proteomes" id="UP000006548">
    <property type="component" value="Chromosome 2"/>
</dbReference>
<dbReference type="ExpressionAtlas" id="Q9ZQE6">
    <property type="expression patterns" value="baseline and differential"/>
</dbReference>
<dbReference type="GO" id="GO:0005739">
    <property type="term" value="C:mitochondrion"/>
    <property type="evidence" value="ECO:0000314"/>
    <property type="project" value="TAIR"/>
</dbReference>
<dbReference type="GO" id="GO:0005509">
    <property type="term" value="F:calcium ion binding"/>
    <property type="evidence" value="ECO:0007669"/>
    <property type="project" value="InterPro"/>
</dbReference>
<dbReference type="CDD" id="cd00051">
    <property type="entry name" value="EFh"/>
    <property type="match status" value="2"/>
</dbReference>
<dbReference type="FunFam" id="1.10.238.10:FF:000564">
    <property type="entry name" value="Calmodulin-like protein 1"/>
    <property type="match status" value="1"/>
</dbReference>
<dbReference type="FunFam" id="1.10.238.10:FF:000089">
    <property type="entry name" value="calmodulin-like protein 3"/>
    <property type="match status" value="1"/>
</dbReference>
<dbReference type="Gene3D" id="1.10.238.10">
    <property type="entry name" value="EF-hand"/>
    <property type="match status" value="2"/>
</dbReference>
<dbReference type="InterPro" id="IPR011992">
    <property type="entry name" value="EF-hand-dom_pair"/>
</dbReference>
<dbReference type="InterPro" id="IPR018247">
    <property type="entry name" value="EF_Hand_1_Ca_BS"/>
</dbReference>
<dbReference type="InterPro" id="IPR002048">
    <property type="entry name" value="EF_hand_dom"/>
</dbReference>
<dbReference type="InterPro" id="IPR039647">
    <property type="entry name" value="EF_hand_pair_protein_CML-like"/>
</dbReference>
<dbReference type="PANTHER" id="PTHR10891">
    <property type="entry name" value="EF-HAND CALCIUM-BINDING DOMAIN CONTAINING PROTEIN"/>
    <property type="match status" value="1"/>
</dbReference>
<dbReference type="Pfam" id="PF13499">
    <property type="entry name" value="EF-hand_7"/>
    <property type="match status" value="2"/>
</dbReference>
<dbReference type="PRINTS" id="PR00450">
    <property type="entry name" value="RECOVERIN"/>
</dbReference>
<dbReference type="SMART" id="SM00054">
    <property type="entry name" value="EFh"/>
    <property type="match status" value="4"/>
</dbReference>
<dbReference type="SUPFAM" id="SSF47473">
    <property type="entry name" value="EF-hand"/>
    <property type="match status" value="1"/>
</dbReference>
<dbReference type="PROSITE" id="PS00018">
    <property type="entry name" value="EF_HAND_1"/>
    <property type="match status" value="4"/>
</dbReference>
<dbReference type="PROSITE" id="PS50222">
    <property type="entry name" value="EF_HAND_2"/>
    <property type="match status" value="4"/>
</dbReference>
<proteinExistence type="evidence at transcript level"/>
<sequence>MSNVSFLELQYKLSKNKMLRKPSRMFSRDRQSSGLSSPGPGGFSQPSVNEMRRVFSRFDLDKDGKISQTEYKVVLRALGQERAIEDVPKIFKAVDLDGDGFIDFREFIDAYKRSGGIRSSDIRNSFWTFDLNGDGKISAEEVMSVLWKLGERCSLEDCNRMVRAVDADGDGLVNMEEFIKMMSSNNV</sequence>
<evidence type="ECO:0000250" key="1"/>
<evidence type="ECO:0000255" key="2">
    <source>
        <dbReference type="PROSITE-ProRule" id="PRU00448"/>
    </source>
</evidence>
<evidence type="ECO:0000256" key="3">
    <source>
        <dbReference type="SAM" id="MobiDB-lite"/>
    </source>
</evidence>
<evidence type="ECO:0000303" key="4">
    <source ref="4"/>
</evidence>
<evidence type="ECO:0000305" key="5"/>
<feature type="chain" id="PRO_0000342884" description="Calmodulin-like protein 30">
    <location>
        <begin position="1"/>
        <end position="187"/>
    </location>
</feature>
<feature type="domain" description="EF-hand 1" evidence="2">
    <location>
        <begin position="46"/>
        <end position="81"/>
    </location>
</feature>
<feature type="domain" description="EF-hand 2" evidence="2">
    <location>
        <begin position="82"/>
        <end position="117"/>
    </location>
</feature>
<feature type="domain" description="EF-hand 3" evidence="2">
    <location>
        <begin position="129"/>
        <end position="152"/>
    </location>
</feature>
<feature type="domain" description="EF-hand 4" evidence="2">
    <location>
        <begin position="153"/>
        <end position="187"/>
    </location>
</feature>
<feature type="region of interest" description="Disordered" evidence="3">
    <location>
        <begin position="21"/>
        <end position="47"/>
    </location>
</feature>
<feature type="compositionally biased region" description="Low complexity" evidence="3">
    <location>
        <begin position="32"/>
        <end position="47"/>
    </location>
</feature>
<feature type="binding site" evidence="2">
    <location>
        <position position="59"/>
    </location>
    <ligand>
        <name>Ca(2+)</name>
        <dbReference type="ChEBI" id="CHEBI:29108"/>
        <label>1</label>
    </ligand>
</feature>
<feature type="binding site" evidence="2">
    <location>
        <position position="61"/>
    </location>
    <ligand>
        <name>Ca(2+)</name>
        <dbReference type="ChEBI" id="CHEBI:29108"/>
        <label>1</label>
    </ligand>
</feature>
<feature type="binding site" evidence="2">
    <location>
        <position position="63"/>
    </location>
    <ligand>
        <name>Ca(2+)</name>
        <dbReference type="ChEBI" id="CHEBI:29108"/>
        <label>1</label>
    </ligand>
</feature>
<feature type="binding site" evidence="2">
    <location>
        <position position="65"/>
    </location>
    <ligand>
        <name>Ca(2+)</name>
        <dbReference type="ChEBI" id="CHEBI:29108"/>
        <label>1</label>
    </ligand>
</feature>
<feature type="binding site" evidence="2">
    <location>
        <position position="70"/>
    </location>
    <ligand>
        <name>Ca(2+)</name>
        <dbReference type="ChEBI" id="CHEBI:29108"/>
        <label>1</label>
    </ligand>
</feature>
<feature type="binding site" evidence="2">
    <location>
        <position position="95"/>
    </location>
    <ligand>
        <name>Ca(2+)</name>
        <dbReference type="ChEBI" id="CHEBI:29108"/>
        <label>2</label>
    </ligand>
</feature>
<feature type="binding site" evidence="2">
    <location>
        <position position="97"/>
    </location>
    <ligand>
        <name>Ca(2+)</name>
        <dbReference type="ChEBI" id="CHEBI:29108"/>
        <label>2</label>
    </ligand>
</feature>
<feature type="binding site" evidence="2">
    <location>
        <position position="99"/>
    </location>
    <ligand>
        <name>Ca(2+)</name>
        <dbReference type="ChEBI" id="CHEBI:29108"/>
        <label>2</label>
    </ligand>
</feature>
<feature type="binding site" evidence="2">
    <location>
        <position position="106"/>
    </location>
    <ligand>
        <name>Ca(2+)</name>
        <dbReference type="ChEBI" id="CHEBI:29108"/>
        <label>2</label>
    </ligand>
</feature>
<feature type="binding site" evidence="2">
    <location>
        <position position="130"/>
    </location>
    <ligand>
        <name>Ca(2+)</name>
        <dbReference type="ChEBI" id="CHEBI:29108"/>
        <label>3</label>
    </ligand>
</feature>
<feature type="binding site" evidence="2">
    <location>
        <position position="132"/>
    </location>
    <ligand>
        <name>Ca(2+)</name>
        <dbReference type="ChEBI" id="CHEBI:29108"/>
        <label>3</label>
    </ligand>
</feature>
<feature type="binding site" evidence="2">
    <location>
        <position position="134"/>
    </location>
    <ligand>
        <name>Ca(2+)</name>
        <dbReference type="ChEBI" id="CHEBI:29108"/>
        <label>3</label>
    </ligand>
</feature>
<feature type="binding site" evidence="2">
    <location>
        <position position="136"/>
    </location>
    <ligand>
        <name>Ca(2+)</name>
        <dbReference type="ChEBI" id="CHEBI:29108"/>
        <label>3</label>
    </ligand>
</feature>
<feature type="binding site" evidence="2">
    <location>
        <position position="141"/>
    </location>
    <ligand>
        <name>Ca(2+)</name>
        <dbReference type="ChEBI" id="CHEBI:29108"/>
        <label>3</label>
    </ligand>
</feature>
<feature type="binding site" evidence="2">
    <location>
        <position position="166"/>
    </location>
    <ligand>
        <name>Ca(2+)</name>
        <dbReference type="ChEBI" id="CHEBI:29108"/>
        <label>4</label>
    </ligand>
</feature>
<feature type="binding site" evidence="2">
    <location>
        <position position="168"/>
    </location>
    <ligand>
        <name>Ca(2+)</name>
        <dbReference type="ChEBI" id="CHEBI:29108"/>
        <label>4</label>
    </ligand>
</feature>
<feature type="binding site" evidence="2">
    <location>
        <position position="170"/>
    </location>
    <ligand>
        <name>Ca(2+)</name>
        <dbReference type="ChEBI" id="CHEBI:29108"/>
        <label>4</label>
    </ligand>
</feature>
<feature type="binding site" evidence="2">
    <location>
        <position position="177"/>
    </location>
    <ligand>
        <name>Ca(2+)</name>
        <dbReference type="ChEBI" id="CHEBI:29108"/>
        <label>4</label>
    </ligand>
</feature>
<protein>
    <recommendedName>
        <fullName evidence="4">Calmodulin-like protein 30</fullName>
    </recommendedName>
</protein>
<reference key="1">
    <citation type="journal article" date="1999" name="Nature">
        <title>Sequence and analysis of chromosome 2 of the plant Arabidopsis thaliana.</title>
        <authorList>
            <person name="Lin X."/>
            <person name="Kaul S."/>
            <person name="Rounsley S.D."/>
            <person name="Shea T.P."/>
            <person name="Benito M.-I."/>
            <person name="Town C.D."/>
            <person name="Fujii C.Y."/>
            <person name="Mason T.M."/>
            <person name="Bowman C.L."/>
            <person name="Barnstead M.E."/>
            <person name="Feldblyum T.V."/>
            <person name="Buell C.R."/>
            <person name="Ketchum K.A."/>
            <person name="Lee J.J."/>
            <person name="Ronning C.M."/>
            <person name="Koo H.L."/>
            <person name="Moffat K.S."/>
            <person name="Cronin L.A."/>
            <person name="Shen M."/>
            <person name="Pai G."/>
            <person name="Van Aken S."/>
            <person name="Umayam L."/>
            <person name="Tallon L.J."/>
            <person name="Gill J.E."/>
            <person name="Adams M.D."/>
            <person name="Carrera A.J."/>
            <person name="Creasy T.H."/>
            <person name="Goodman H.M."/>
            <person name="Somerville C.R."/>
            <person name="Copenhaver G.P."/>
            <person name="Preuss D."/>
            <person name="Nierman W.C."/>
            <person name="White O."/>
            <person name="Eisen J.A."/>
            <person name="Salzberg S.L."/>
            <person name="Fraser C.M."/>
            <person name="Venter J.C."/>
        </authorList>
    </citation>
    <scope>NUCLEOTIDE SEQUENCE [LARGE SCALE GENOMIC DNA]</scope>
    <source>
        <strain>cv. Columbia</strain>
    </source>
</reference>
<reference key="2">
    <citation type="journal article" date="2017" name="Plant J.">
        <title>Araport11: a complete reannotation of the Arabidopsis thaliana reference genome.</title>
        <authorList>
            <person name="Cheng C.Y."/>
            <person name="Krishnakumar V."/>
            <person name="Chan A.P."/>
            <person name="Thibaud-Nissen F."/>
            <person name="Schobel S."/>
            <person name="Town C.D."/>
        </authorList>
    </citation>
    <scope>GENOME REANNOTATION</scope>
    <source>
        <strain>cv. Columbia</strain>
    </source>
</reference>
<reference key="3">
    <citation type="journal article" date="2003" name="Science">
        <title>Empirical analysis of transcriptional activity in the Arabidopsis genome.</title>
        <authorList>
            <person name="Yamada K."/>
            <person name="Lim J."/>
            <person name="Dale J.M."/>
            <person name="Chen H."/>
            <person name="Shinn P."/>
            <person name="Palm C.J."/>
            <person name="Southwick A.M."/>
            <person name="Wu H.C."/>
            <person name="Kim C.J."/>
            <person name="Nguyen M."/>
            <person name="Pham P.K."/>
            <person name="Cheuk R.F."/>
            <person name="Karlin-Newmann G."/>
            <person name="Liu S.X."/>
            <person name="Lam B."/>
            <person name="Sakano H."/>
            <person name="Wu T."/>
            <person name="Yu G."/>
            <person name="Miranda M."/>
            <person name="Quach H.L."/>
            <person name="Tripp M."/>
            <person name="Chang C.H."/>
            <person name="Lee J.M."/>
            <person name="Toriumi M.J."/>
            <person name="Chan M.M."/>
            <person name="Tang C.C."/>
            <person name="Onodera C.S."/>
            <person name="Deng J.M."/>
            <person name="Akiyama K."/>
            <person name="Ansari Y."/>
            <person name="Arakawa T."/>
            <person name="Banh J."/>
            <person name="Banno F."/>
            <person name="Bowser L."/>
            <person name="Brooks S.Y."/>
            <person name="Carninci P."/>
            <person name="Chao Q."/>
            <person name="Choy N."/>
            <person name="Enju A."/>
            <person name="Goldsmith A.D."/>
            <person name="Gurjal M."/>
            <person name="Hansen N.F."/>
            <person name="Hayashizaki Y."/>
            <person name="Johnson-Hopson C."/>
            <person name="Hsuan V.W."/>
            <person name="Iida K."/>
            <person name="Karnes M."/>
            <person name="Khan S."/>
            <person name="Koesema E."/>
            <person name="Ishida J."/>
            <person name="Jiang P.X."/>
            <person name="Jones T."/>
            <person name="Kawai J."/>
            <person name="Kamiya A."/>
            <person name="Meyers C."/>
            <person name="Nakajima M."/>
            <person name="Narusaka M."/>
            <person name="Seki M."/>
            <person name="Sakurai T."/>
            <person name="Satou M."/>
            <person name="Tamse R."/>
            <person name="Vaysberg M."/>
            <person name="Wallender E.K."/>
            <person name="Wong C."/>
            <person name="Yamamura Y."/>
            <person name="Yuan S."/>
            <person name="Shinozaki K."/>
            <person name="Davis R.W."/>
            <person name="Theologis A."/>
            <person name="Ecker J.R."/>
        </authorList>
    </citation>
    <scope>NUCLEOTIDE SEQUENCE [LARGE SCALE MRNA]</scope>
    <source>
        <strain>cv. Columbia</strain>
    </source>
</reference>
<reference key="4">
    <citation type="journal article" date="2003" name="New Phytol.">
        <title>Calmodulins and related potential calcium sensors of Arabidopsis.</title>
        <authorList>
            <person name="McCormack E."/>
            <person name="Braam J."/>
        </authorList>
    </citation>
    <scope>GENE FAMILY</scope>
    <scope>NOMENCLATURE</scope>
</reference>
<organism>
    <name type="scientific">Arabidopsis thaliana</name>
    <name type="common">Mouse-ear cress</name>
    <dbReference type="NCBI Taxonomy" id="3702"/>
    <lineage>
        <taxon>Eukaryota</taxon>
        <taxon>Viridiplantae</taxon>
        <taxon>Streptophyta</taxon>
        <taxon>Embryophyta</taxon>
        <taxon>Tracheophyta</taxon>
        <taxon>Spermatophyta</taxon>
        <taxon>Magnoliopsida</taxon>
        <taxon>eudicotyledons</taxon>
        <taxon>Gunneridae</taxon>
        <taxon>Pentapetalae</taxon>
        <taxon>rosids</taxon>
        <taxon>malvids</taxon>
        <taxon>Brassicales</taxon>
        <taxon>Brassicaceae</taxon>
        <taxon>Camelineae</taxon>
        <taxon>Arabidopsis</taxon>
    </lineage>
</organism>
<accession>Q9ZQE6</accession>
<keyword id="KW-0106">Calcium</keyword>
<keyword id="KW-0479">Metal-binding</keyword>
<keyword id="KW-1185">Reference proteome</keyword>
<keyword id="KW-0677">Repeat</keyword>